<sequence>MAETAASRTGSVSRKTNETSISVSVNLDGTGKSTISTGVGFFDHMLDQLSRHSLIDMEIDAKGDLHIDDHHTVEDTGIAIGQAISKALGDRRGITRYASIDLAMDETMTKAAVDLSGRPFLVWNVAFSAPKIGTFDTELVREFFHALAQNAGITLHILNHYGANNHHIAETCFKAVARALRTATEIDPRQAGRVPSTKGTLV</sequence>
<name>HIS7_RHIJ3</name>
<accession>Q1MNB6</accession>
<protein>
    <recommendedName>
        <fullName evidence="1">Imidazoleglycerol-phosphate dehydratase</fullName>
        <shortName evidence="1">IGPD</shortName>
        <ecNumber evidence="1">4.2.1.19</ecNumber>
    </recommendedName>
</protein>
<comment type="catalytic activity">
    <reaction evidence="1">
        <text>D-erythro-1-(imidazol-4-yl)glycerol 3-phosphate = 3-(imidazol-4-yl)-2-oxopropyl phosphate + H2O</text>
        <dbReference type="Rhea" id="RHEA:11040"/>
        <dbReference type="ChEBI" id="CHEBI:15377"/>
        <dbReference type="ChEBI" id="CHEBI:57766"/>
        <dbReference type="ChEBI" id="CHEBI:58278"/>
        <dbReference type="EC" id="4.2.1.19"/>
    </reaction>
</comment>
<comment type="pathway">
    <text evidence="1">Amino-acid biosynthesis; L-histidine biosynthesis; L-histidine from 5-phospho-alpha-D-ribose 1-diphosphate: step 6/9.</text>
</comment>
<comment type="subcellular location">
    <subcellularLocation>
        <location evidence="1">Cytoplasm</location>
    </subcellularLocation>
</comment>
<comment type="similarity">
    <text evidence="1">Belongs to the imidazoleglycerol-phosphate dehydratase family.</text>
</comment>
<proteinExistence type="inferred from homology"/>
<dbReference type="EC" id="4.2.1.19" evidence="1"/>
<dbReference type="EMBL" id="AM236080">
    <property type="protein sequence ID" value="CAK05536.1"/>
    <property type="molecule type" value="Genomic_DNA"/>
</dbReference>
<dbReference type="RefSeq" id="WP_003544176.1">
    <property type="nucleotide sequence ID" value="NC_008380.1"/>
</dbReference>
<dbReference type="SMR" id="Q1MNB6"/>
<dbReference type="EnsemblBacteria" id="CAK05536">
    <property type="protein sequence ID" value="CAK05536"/>
    <property type="gene ID" value="RL0048"/>
</dbReference>
<dbReference type="GeneID" id="67485022"/>
<dbReference type="KEGG" id="rle:RL0048"/>
<dbReference type="eggNOG" id="COG0131">
    <property type="taxonomic scope" value="Bacteria"/>
</dbReference>
<dbReference type="HOGENOM" id="CLU_044308_3_0_5"/>
<dbReference type="UniPathway" id="UPA00031">
    <property type="reaction ID" value="UER00011"/>
</dbReference>
<dbReference type="Proteomes" id="UP000006575">
    <property type="component" value="Chromosome"/>
</dbReference>
<dbReference type="GO" id="GO:0005737">
    <property type="term" value="C:cytoplasm"/>
    <property type="evidence" value="ECO:0007669"/>
    <property type="project" value="UniProtKB-SubCell"/>
</dbReference>
<dbReference type="GO" id="GO:0004424">
    <property type="term" value="F:imidazoleglycerol-phosphate dehydratase activity"/>
    <property type="evidence" value="ECO:0007669"/>
    <property type="project" value="UniProtKB-UniRule"/>
</dbReference>
<dbReference type="GO" id="GO:0000105">
    <property type="term" value="P:L-histidine biosynthetic process"/>
    <property type="evidence" value="ECO:0007669"/>
    <property type="project" value="UniProtKB-UniRule"/>
</dbReference>
<dbReference type="CDD" id="cd07914">
    <property type="entry name" value="IGPD"/>
    <property type="match status" value="1"/>
</dbReference>
<dbReference type="FunFam" id="3.30.230.40:FF:000001">
    <property type="entry name" value="Imidazoleglycerol-phosphate dehydratase HisB"/>
    <property type="match status" value="1"/>
</dbReference>
<dbReference type="FunFam" id="3.30.230.40:FF:000003">
    <property type="entry name" value="Imidazoleglycerol-phosphate dehydratase HisB"/>
    <property type="match status" value="1"/>
</dbReference>
<dbReference type="Gene3D" id="3.30.230.40">
    <property type="entry name" value="Imidazole glycerol phosphate dehydratase, domain 1"/>
    <property type="match status" value="2"/>
</dbReference>
<dbReference type="HAMAP" id="MF_00076">
    <property type="entry name" value="HisB"/>
    <property type="match status" value="1"/>
</dbReference>
<dbReference type="InterPro" id="IPR038494">
    <property type="entry name" value="IGPD_sf"/>
</dbReference>
<dbReference type="InterPro" id="IPR000807">
    <property type="entry name" value="ImidazoleglycerolP_deHydtase"/>
</dbReference>
<dbReference type="InterPro" id="IPR020565">
    <property type="entry name" value="ImidazoleglycerP_deHydtase_CS"/>
</dbReference>
<dbReference type="InterPro" id="IPR020568">
    <property type="entry name" value="Ribosomal_Su5_D2-typ_SF"/>
</dbReference>
<dbReference type="NCBIfam" id="NF002109">
    <property type="entry name" value="PRK00951.1-5"/>
    <property type="match status" value="1"/>
</dbReference>
<dbReference type="NCBIfam" id="NF002111">
    <property type="entry name" value="PRK00951.2-1"/>
    <property type="match status" value="1"/>
</dbReference>
<dbReference type="NCBIfam" id="NF002114">
    <property type="entry name" value="PRK00951.2-4"/>
    <property type="match status" value="1"/>
</dbReference>
<dbReference type="PANTHER" id="PTHR23133:SF2">
    <property type="entry name" value="IMIDAZOLEGLYCEROL-PHOSPHATE DEHYDRATASE"/>
    <property type="match status" value="1"/>
</dbReference>
<dbReference type="PANTHER" id="PTHR23133">
    <property type="entry name" value="IMIDAZOLEGLYCEROL-PHOSPHATE DEHYDRATASE HIS7"/>
    <property type="match status" value="1"/>
</dbReference>
<dbReference type="Pfam" id="PF00475">
    <property type="entry name" value="IGPD"/>
    <property type="match status" value="1"/>
</dbReference>
<dbReference type="SUPFAM" id="SSF54211">
    <property type="entry name" value="Ribosomal protein S5 domain 2-like"/>
    <property type="match status" value="2"/>
</dbReference>
<dbReference type="PROSITE" id="PS00954">
    <property type="entry name" value="IGP_DEHYDRATASE_1"/>
    <property type="match status" value="1"/>
</dbReference>
<dbReference type="PROSITE" id="PS00955">
    <property type="entry name" value="IGP_DEHYDRATASE_2"/>
    <property type="match status" value="1"/>
</dbReference>
<organism>
    <name type="scientific">Rhizobium johnstonii (strain DSM 114642 / LMG 32736 / 3841)</name>
    <name type="common">Rhizobium leguminosarum bv. viciae</name>
    <dbReference type="NCBI Taxonomy" id="216596"/>
    <lineage>
        <taxon>Bacteria</taxon>
        <taxon>Pseudomonadati</taxon>
        <taxon>Pseudomonadota</taxon>
        <taxon>Alphaproteobacteria</taxon>
        <taxon>Hyphomicrobiales</taxon>
        <taxon>Rhizobiaceae</taxon>
        <taxon>Rhizobium/Agrobacterium group</taxon>
        <taxon>Rhizobium</taxon>
        <taxon>Rhizobium johnstonii</taxon>
    </lineage>
</organism>
<reference key="1">
    <citation type="journal article" date="2006" name="Genome Biol.">
        <title>The genome of Rhizobium leguminosarum has recognizable core and accessory components.</title>
        <authorList>
            <person name="Young J.P.W."/>
            <person name="Crossman L.C."/>
            <person name="Johnston A.W.B."/>
            <person name="Thomson N.R."/>
            <person name="Ghazoui Z.F."/>
            <person name="Hull K.H."/>
            <person name="Wexler M."/>
            <person name="Curson A.R.J."/>
            <person name="Todd J.D."/>
            <person name="Poole P.S."/>
            <person name="Mauchline T.H."/>
            <person name="East A.K."/>
            <person name="Quail M.A."/>
            <person name="Churcher C."/>
            <person name="Arrowsmith C."/>
            <person name="Cherevach I."/>
            <person name="Chillingworth T."/>
            <person name="Clarke K."/>
            <person name="Cronin A."/>
            <person name="Davis P."/>
            <person name="Fraser A."/>
            <person name="Hance Z."/>
            <person name="Hauser H."/>
            <person name="Jagels K."/>
            <person name="Moule S."/>
            <person name="Mungall K."/>
            <person name="Norbertczak H."/>
            <person name="Rabbinowitsch E."/>
            <person name="Sanders M."/>
            <person name="Simmonds M."/>
            <person name="Whitehead S."/>
            <person name="Parkhill J."/>
        </authorList>
    </citation>
    <scope>NUCLEOTIDE SEQUENCE [LARGE SCALE GENOMIC DNA]</scope>
    <source>
        <strain>DSM 114642 / LMG 32736 / 3841</strain>
    </source>
</reference>
<feature type="chain" id="PRO_0000336338" description="Imidazoleglycerol-phosphate dehydratase">
    <location>
        <begin position="1"/>
        <end position="202"/>
    </location>
</feature>
<gene>
    <name evidence="1" type="primary">hisB</name>
    <name type="ordered locus">RL0048</name>
</gene>
<keyword id="KW-0028">Amino-acid biosynthesis</keyword>
<keyword id="KW-0963">Cytoplasm</keyword>
<keyword id="KW-0368">Histidine biosynthesis</keyword>
<keyword id="KW-0456">Lyase</keyword>
<evidence type="ECO:0000255" key="1">
    <source>
        <dbReference type="HAMAP-Rule" id="MF_00076"/>
    </source>
</evidence>